<reference key="1">
    <citation type="journal article" date="2008" name="Genome Res.">
        <title>The genome of Pelotomaculum thermopropionicum reveals niche-associated evolution in anaerobic microbiota.</title>
        <authorList>
            <person name="Kosaka T."/>
            <person name="Kato S."/>
            <person name="Shimoyama T."/>
            <person name="Ishii S."/>
            <person name="Abe T."/>
            <person name="Watanabe K."/>
        </authorList>
    </citation>
    <scope>NUCLEOTIDE SEQUENCE [LARGE SCALE GENOMIC DNA]</scope>
    <source>
        <strain>DSM 13744 / JCM 10971 / SI</strain>
    </source>
</reference>
<dbReference type="EMBL" id="AP009389">
    <property type="protein sequence ID" value="BAF58234.1"/>
    <property type="molecule type" value="Genomic_DNA"/>
</dbReference>
<dbReference type="SMR" id="A5D6B3"/>
<dbReference type="STRING" id="370438.PTH_0053"/>
<dbReference type="KEGG" id="pth:PTH_0053"/>
<dbReference type="eggNOG" id="COG0353">
    <property type="taxonomic scope" value="Bacteria"/>
</dbReference>
<dbReference type="HOGENOM" id="CLU_060739_1_0_9"/>
<dbReference type="Proteomes" id="UP000006556">
    <property type="component" value="Chromosome"/>
</dbReference>
<dbReference type="GO" id="GO:0003677">
    <property type="term" value="F:DNA binding"/>
    <property type="evidence" value="ECO:0007669"/>
    <property type="project" value="UniProtKB-UniRule"/>
</dbReference>
<dbReference type="GO" id="GO:0008270">
    <property type="term" value="F:zinc ion binding"/>
    <property type="evidence" value="ECO:0007669"/>
    <property type="project" value="UniProtKB-KW"/>
</dbReference>
<dbReference type="GO" id="GO:0006310">
    <property type="term" value="P:DNA recombination"/>
    <property type="evidence" value="ECO:0007669"/>
    <property type="project" value="UniProtKB-UniRule"/>
</dbReference>
<dbReference type="GO" id="GO:0006281">
    <property type="term" value="P:DNA repair"/>
    <property type="evidence" value="ECO:0007669"/>
    <property type="project" value="UniProtKB-UniRule"/>
</dbReference>
<dbReference type="CDD" id="cd01025">
    <property type="entry name" value="TOPRIM_recR"/>
    <property type="match status" value="1"/>
</dbReference>
<dbReference type="Gene3D" id="3.30.60.80">
    <property type="match status" value="1"/>
</dbReference>
<dbReference type="Gene3D" id="3.40.1360.10">
    <property type="match status" value="1"/>
</dbReference>
<dbReference type="Gene3D" id="6.10.250.240">
    <property type="match status" value="1"/>
</dbReference>
<dbReference type="Gene3D" id="1.10.8.420">
    <property type="entry name" value="RecR Domain 1"/>
    <property type="match status" value="1"/>
</dbReference>
<dbReference type="HAMAP" id="MF_00017">
    <property type="entry name" value="RecR"/>
    <property type="match status" value="1"/>
</dbReference>
<dbReference type="InterPro" id="IPR000093">
    <property type="entry name" value="DNA_Rcmb_RecR"/>
</dbReference>
<dbReference type="InterPro" id="IPR003583">
    <property type="entry name" value="Hlx-hairpin-Hlx_DNA-bd_motif"/>
</dbReference>
<dbReference type="InterPro" id="IPR023627">
    <property type="entry name" value="Rcmb_RecR"/>
</dbReference>
<dbReference type="InterPro" id="IPR015967">
    <property type="entry name" value="Rcmb_RecR_Znf"/>
</dbReference>
<dbReference type="InterPro" id="IPR006171">
    <property type="entry name" value="TOPRIM_dom"/>
</dbReference>
<dbReference type="InterPro" id="IPR034137">
    <property type="entry name" value="TOPRIM_RecR"/>
</dbReference>
<dbReference type="NCBIfam" id="TIGR00615">
    <property type="entry name" value="recR"/>
    <property type="match status" value="1"/>
</dbReference>
<dbReference type="PANTHER" id="PTHR30446">
    <property type="entry name" value="RECOMBINATION PROTEIN RECR"/>
    <property type="match status" value="1"/>
</dbReference>
<dbReference type="PANTHER" id="PTHR30446:SF0">
    <property type="entry name" value="RECOMBINATION PROTEIN RECR"/>
    <property type="match status" value="1"/>
</dbReference>
<dbReference type="Pfam" id="PF21175">
    <property type="entry name" value="RecR_C"/>
    <property type="match status" value="1"/>
</dbReference>
<dbReference type="Pfam" id="PF21176">
    <property type="entry name" value="RecR_HhH"/>
    <property type="match status" value="1"/>
</dbReference>
<dbReference type="Pfam" id="PF02132">
    <property type="entry name" value="RecR_ZnF"/>
    <property type="match status" value="1"/>
</dbReference>
<dbReference type="Pfam" id="PF13662">
    <property type="entry name" value="Toprim_4"/>
    <property type="match status" value="1"/>
</dbReference>
<dbReference type="SMART" id="SM00278">
    <property type="entry name" value="HhH1"/>
    <property type="match status" value="1"/>
</dbReference>
<dbReference type="SMART" id="SM00493">
    <property type="entry name" value="TOPRIM"/>
    <property type="match status" value="1"/>
</dbReference>
<dbReference type="SUPFAM" id="SSF111304">
    <property type="entry name" value="Recombination protein RecR"/>
    <property type="match status" value="1"/>
</dbReference>
<dbReference type="PROSITE" id="PS50880">
    <property type="entry name" value="TOPRIM"/>
    <property type="match status" value="1"/>
</dbReference>
<sequence>MDYYAKPVARLIEQLARLPGIGPKTAQRLAFYLLNAPLEVALNLARAVEEARQAVRYCSVCGNLTDTDPCFICGDDRRRRDLLCVVERPRDVVALEKARVFKGLYHVLHGSISPVEGIGPEQLRIRELLKRLEGGTVREVILATNPTVEGETTALYLAGLIKPLGVSVTRIAHGLPVGADLEYADEMTLSKALEGRREMK</sequence>
<name>RECR_PELTS</name>
<feature type="chain" id="PRO_1000089752" description="Recombination protein RecR">
    <location>
        <begin position="1"/>
        <end position="200"/>
    </location>
</feature>
<feature type="domain" description="Toprim" evidence="1">
    <location>
        <begin position="81"/>
        <end position="176"/>
    </location>
</feature>
<feature type="zinc finger region" description="C4-type" evidence="1">
    <location>
        <begin position="58"/>
        <end position="73"/>
    </location>
</feature>
<proteinExistence type="inferred from homology"/>
<gene>
    <name evidence="1" type="primary">recR</name>
    <name type="ordered locus">PTH_0053</name>
</gene>
<organism>
    <name type="scientific">Pelotomaculum thermopropionicum (strain DSM 13744 / JCM 10971 / SI)</name>
    <dbReference type="NCBI Taxonomy" id="370438"/>
    <lineage>
        <taxon>Bacteria</taxon>
        <taxon>Bacillati</taxon>
        <taxon>Bacillota</taxon>
        <taxon>Clostridia</taxon>
        <taxon>Eubacteriales</taxon>
        <taxon>Desulfotomaculaceae</taxon>
        <taxon>Pelotomaculum</taxon>
    </lineage>
</organism>
<accession>A5D6B3</accession>
<protein>
    <recommendedName>
        <fullName evidence="1">Recombination protein RecR</fullName>
    </recommendedName>
</protein>
<keyword id="KW-0227">DNA damage</keyword>
<keyword id="KW-0233">DNA recombination</keyword>
<keyword id="KW-0234">DNA repair</keyword>
<keyword id="KW-0479">Metal-binding</keyword>
<keyword id="KW-1185">Reference proteome</keyword>
<keyword id="KW-0862">Zinc</keyword>
<keyword id="KW-0863">Zinc-finger</keyword>
<evidence type="ECO:0000255" key="1">
    <source>
        <dbReference type="HAMAP-Rule" id="MF_00017"/>
    </source>
</evidence>
<comment type="function">
    <text evidence="1">May play a role in DNA repair. It seems to be involved in an RecBC-independent recombinational process of DNA repair. It may act with RecF and RecO.</text>
</comment>
<comment type="similarity">
    <text evidence="1">Belongs to the RecR family.</text>
</comment>